<proteinExistence type="evidence at protein level"/>
<keyword id="KW-0002">3D-structure</keyword>
<keyword id="KW-0227">DNA damage</keyword>
<keyword id="KW-0234">DNA repair</keyword>
<keyword id="KW-1185">Reference proteome</keyword>
<dbReference type="EMBL" id="U27343">
    <property type="protein sequence ID" value="AAB19236.1"/>
    <property type="molecule type" value="Genomic_DNA"/>
</dbReference>
<dbReference type="EMBL" id="AL009126">
    <property type="protein sequence ID" value="CAB13578.1"/>
    <property type="molecule type" value="Genomic_DNA"/>
</dbReference>
<dbReference type="PIR" id="A69663">
    <property type="entry name" value="A69663"/>
</dbReference>
<dbReference type="RefSeq" id="NP_389587.1">
    <property type="nucleotide sequence ID" value="NC_000964.3"/>
</dbReference>
<dbReference type="RefSeq" id="WP_003245099.1">
    <property type="nucleotide sequence ID" value="NZ_OZ025638.1"/>
</dbReference>
<dbReference type="PDB" id="3GAB">
    <property type="method" value="X-ray"/>
    <property type="resolution" value="2.50 A"/>
    <property type="chains" value="A/B/C/D=434-627"/>
</dbReference>
<dbReference type="PDB" id="3KDG">
    <property type="method" value="X-ray"/>
    <property type="resolution" value="2.00 A"/>
    <property type="chains" value="A/B=434-627"/>
</dbReference>
<dbReference type="PDB" id="3KDK">
    <property type="method" value="X-ray"/>
    <property type="resolution" value="2.26 A"/>
    <property type="chains" value="A/B=434-627"/>
</dbReference>
<dbReference type="PDBsum" id="3GAB"/>
<dbReference type="PDBsum" id="3KDG"/>
<dbReference type="PDBsum" id="3KDK"/>
<dbReference type="SMR" id="P49850"/>
<dbReference type="FunCoup" id="P49850">
    <property type="interactions" value="661"/>
</dbReference>
<dbReference type="IntAct" id="P49850">
    <property type="interactions" value="3"/>
</dbReference>
<dbReference type="STRING" id="224308.BSU17050"/>
<dbReference type="PaxDb" id="224308-BSU17050"/>
<dbReference type="EnsemblBacteria" id="CAB13578">
    <property type="protein sequence ID" value="CAB13578"/>
    <property type="gene ID" value="BSU_17050"/>
</dbReference>
<dbReference type="GeneID" id="939455"/>
<dbReference type="KEGG" id="bsu:BSU17050"/>
<dbReference type="PATRIC" id="fig|224308.179.peg.1846"/>
<dbReference type="eggNOG" id="COG0323">
    <property type="taxonomic scope" value="Bacteria"/>
</dbReference>
<dbReference type="InParanoid" id="P49850"/>
<dbReference type="OrthoDB" id="9763467at2"/>
<dbReference type="PhylomeDB" id="P49850"/>
<dbReference type="BioCyc" id="BSUB:BSU17050-MONOMER"/>
<dbReference type="EvolutionaryTrace" id="P49850"/>
<dbReference type="Proteomes" id="UP000001570">
    <property type="component" value="Chromosome"/>
</dbReference>
<dbReference type="GO" id="GO:0032300">
    <property type="term" value="C:mismatch repair complex"/>
    <property type="evidence" value="ECO:0000318"/>
    <property type="project" value="GO_Central"/>
</dbReference>
<dbReference type="GO" id="GO:0005524">
    <property type="term" value="F:ATP binding"/>
    <property type="evidence" value="ECO:0007669"/>
    <property type="project" value="InterPro"/>
</dbReference>
<dbReference type="GO" id="GO:0016887">
    <property type="term" value="F:ATP hydrolysis activity"/>
    <property type="evidence" value="ECO:0000318"/>
    <property type="project" value="GO_Central"/>
</dbReference>
<dbReference type="GO" id="GO:0140664">
    <property type="term" value="F:ATP-dependent DNA damage sensor activity"/>
    <property type="evidence" value="ECO:0007669"/>
    <property type="project" value="InterPro"/>
</dbReference>
<dbReference type="GO" id="GO:0030983">
    <property type="term" value="F:mismatched DNA binding"/>
    <property type="evidence" value="ECO:0007669"/>
    <property type="project" value="InterPro"/>
</dbReference>
<dbReference type="GO" id="GO:0006298">
    <property type="term" value="P:mismatch repair"/>
    <property type="evidence" value="ECO:0000318"/>
    <property type="project" value="GO_Central"/>
</dbReference>
<dbReference type="CDD" id="cd16926">
    <property type="entry name" value="HATPase_MutL-MLH-PMS-like"/>
    <property type="match status" value="1"/>
</dbReference>
<dbReference type="CDD" id="cd00782">
    <property type="entry name" value="MutL_Trans"/>
    <property type="match status" value="1"/>
</dbReference>
<dbReference type="FunFam" id="3.30.1370.100:FF:000004">
    <property type="entry name" value="DNA mismatch repair endonuclease MutL"/>
    <property type="match status" value="1"/>
</dbReference>
<dbReference type="FunFam" id="3.30.230.10:FF:000036">
    <property type="entry name" value="DNA mismatch repair endonuclease MutL"/>
    <property type="match status" value="1"/>
</dbReference>
<dbReference type="FunFam" id="3.30.565.10:FF:000003">
    <property type="entry name" value="DNA mismatch repair endonuclease MutL"/>
    <property type="match status" value="1"/>
</dbReference>
<dbReference type="Gene3D" id="3.30.230.10">
    <property type="match status" value="1"/>
</dbReference>
<dbReference type="Gene3D" id="3.30.565.10">
    <property type="entry name" value="Histidine kinase-like ATPase, C-terminal domain"/>
    <property type="match status" value="1"/>
</dbReference>
<dbReference type="Gene3D" id="3.30.1540.20">
    <property type="entry name" value="MutL, C-terminal domain, dimerisation subdomain"/>
    <property type="match status" value="1"/>
</dbReference>
<dbReference type="Gene3D" id="3.30.1370.100">
    <property type="entry name" value="MutL, C-terminal domain, regulatory subdomain"/>
    <property type="match status" value="1"/>
</dbReference>
<dbReference type="HAMAP" id="MF_00149">
    <property type="entry name" value="DNA_mis_repair"/>
    <property type="match status" value="1"/>
</dbReference>
<dbReference type="InterPro" id="IPR014762">
    <property type="entry name" value="DNA_mismatch_repair_CS"/>
</dbReference>
<dbReference type="InterPro" id="IPR020667">
    <property type="entry name" value="DNA_mismatch_repair_MutL"/>
</dbReference>
<dbReference type="InterPro" id="IPR013507">
    <property type="entry name" value="DNA_mismatch_S5_2-like"/>
</dbReference>
<dbReference type="InterPro" id="IPR036890">
    <property type="entry name" value="HATPase_C_sf"/>
</dbReference>
<dbReference type="InterPro" id="IPR002099">
    <property type="entry name" value="MutL/Mlh/PMS"/>
</dbReference>
<dbReference type="InterPro" id="IPR038973">
    <property type="entry name" value="MutL/Mlh/Pms-like"/>
</dbReference>
<dbReference type="InterPro" id="IPR014790">
    <property type="entry name" value="MutL_C"/>
</dbReference>
<dbReference type="InterPro" id="IPR042120">
    <property type="entry name" value="MutL_C_dimsub"/>
</dbReference>
<dbReference type="InterPro" id="IPR042121">
    <property type="entry name" value="MutL_C_regsub"/>
</dbReference>
<dbReference type="InterPro" id="IPR037198">
    <property type="entry name" value="MutL_C_sf"/>
</dbReference>
<dbReference type="InterPro" id="IPR020568">
    <property type="entry name" value="Ribosomal_Su5_D2-typ_SF"/>
</dbReference>
<dbReference type="InterPro" id="IPR014721">
    <property type="entry name" value="Ribsml_uS5_D2-typ_fold_subgr"/>
</dbReference>
<dbReference type="NCBIfam" id="TIGR00585">
    <property type="entry name" value="mutl"/>
    <property type="match status" value="1"/>
</dbReference>
<dbReference type="NCBIfam" id="NF000950">
    <property type="entry name" value="PRK00095.1-3"/>
    <property type="match status" value="1"/>
</dbReference>
<dbReference type="PANTHER" id="PTHR10073">
    <property type="entry name" value="DNA MISMATCH REPAIR PROTEIN MLH, PMS, MUTL"/>
    <property type="match status" value="1"/>
</dbReference>
<dbReference type="PANTHER" id="PTHR10073:SF12">
    <property type="entry name" value="DNA MISMATCH REPAIR PROTEIN MLH1"/>
    <property type="match status" value="1"/>
</dbReference>
<dbReference type="Pfam" id="PF01119">
    <property type="entry name" value="DNA_mis_repair"/>
    <property type="match status" value="1"/>
</dbReference>
<dbReference type="Pfam" id="PF13589">
    <property type="entry name" value="HATPase_c_3"/>
    <property type="match status" value="1"/>
</dbReference>
<dbReference type="Pfam" id="PF08676">
    <property type="entry name" value="MutL_C"/>
    <property type="match status" value="1"/>
</dbReference>
<dbReference type="SMART" id="SM01340">
    <property type="entry name" value="DNA_mis_repair"/>
    <property type="match status" value="1"/>
</dbReference>
<dbReference type="SMART" id="SM00853">
    <property type="entry name" value="MutL_C"/>
    <property type="match status" value="1"/>
</dbReference>
<dbReference type="SUPFAM" id="SSF55874">
    <property type="entry name" value="ATPase domain of HSP90 chaperone/DNA topoisomerase II/histidine kinase"/>
    <property type="match status" value="1"/>
</dbReference>
<dbReference type="SUPFAM" id="SSF118116">
    <property type="entry name" value="DNA mismatch repair protein MutL"/>
    <property type="match status" value="1"/>
</dbReference>
<dbReference type="SUPFAM" id="SSF54211">
    <property type="entry name" value="Ribosomal protein S5 domain 2-like"/>
    <property type="match status" value="1"/>
</dbReference>
<dbReference type="PROSITE" id="PS00058">
    <property type="entry name" value="DNA_MISMATCH_REPAIR_1"/>
    <property type="match status" value="1"/>
</dbReference>
<organism>
    <name type="scientific">Bacillus subtilis (strain 168)</name>
    <dbReference type="NCBI Taxonomy" id="224308"/>
    <lineage>
        <taxon>Bacteria</taxon>
        <taxon>Bacillati</taxon>
        <taxon>Bacillota</taxon>
        <taxon>Bacilli</taxon>
        <taxon>Bacillales</taxon>
        <taxon>Bacillaceae</taxon>
        <taxon>Bacillus</taxon>
    </lineage>
</organism>
<evidence type="ECO:0000250" key="1"/>
<evidence type="ECO:0000256" key="2">
    <source>
        <dbReference type="SAM" id="MobiDB-lite"/>
    </source>
</evidence>
<evidence type="ECO:0000269" key="3">
    <source>
    </source>
</evidence>
<evidence type="ECO:0000269" key="4">
    <source>
    </source>
</evidence>
<evidence type="ECO:0000303" key="5">
    <source>
    </source>
</evidence>
<evidence type="ECO:0000305" key="6"/>
<evidence type="ECO:0000305" key="7">
    <source>
    </source>
</evidence>
<evidence type="ECO:0007829" key="8">
    <source>
        <dbReference type="PDB" id="3GAB"/>
    </source>
</evidence>
<evidence type="ECO:0007829" key="9">
    <source>
        <dbReference type="PDB" id="3KDG"/>
    </source>
</evidence>
<name>MUTL_BACSU</name>
<feature type="chain" id="PRO_0000177927" description="DNA mismatch repair protein MutL">
    <location>
        <begin position="1"/>
        <end position="627"/>
    </location>
</feature>
<feature type="region of interest" description="Disordered" evidence="2">
    <location>
        <begin position="354"/>
        <end position="374"/>
    </location>
</feature>
<feature type="compositionally biased region" description="Basic and acidic residues" evidence="2">
    <location>
        <begin position="354"/>
        <end position="364"/>
    </location>
</feature>
<feature type="strand" evidence="9">
    <location>
        <begin position="440"/>
        <end position="445"/>
    </location>
</feature>
<feature type="turn" evidence="9">
    <location>
        <begin position="446"/>
        <end position="448"/>
    </location>
</feature>
<feature type="strand" evidence="9">
    <location>
        <begin position="449"/>
        <end position="454"/>
    </location>
</feature>
<feature type="strand" evidence="9">
    <location>
        <begin position="457"/>
        <end position="462"/>
    </location>
</feature>
<feature type="helix" evidence="9">
    <location>
        <begin position="463"/>
        <end position="480"/>
    </location>
</feature>
<feature type="strand" evidence="9">
    <location>
        <begin position="486"/>
        <end position="496"/>
    </location>
</feature>
<feature type="helix" evidence="9">
    <location>
        <begin position="501"/>
        <end position="507"/>
    </location>
</feature>
<feature type="helix" evidence="9">
    <location>
        <begin position="509"/>
        <end position="514"/>
    </location>
</feature>
<feature type="strand" evidence="9">
    <location>
        <begin position="526"/>
        <end position="533"/>
    </location>
</feature>
<feature type="helix" evidence="9">
    <location>
        <begin position="541"/>
        <end position="555"/>
    </location>
</feature>
<feature type="helix" evidence="9">
    <location>
        <begin position="560"/>
        <end position="573"/>
    </location>
</feature>
<feature type="helix" evidence="9">
    <location>
        <begin position="585"/>
        <end position="597"/>
    </location>
</feature>
<feature type="strand" evidence="8">
    <location>
        <begin position="601"/>
        <end position="603"/>
    </location>
</feature>
<feature type="strand" evidence="9">
    <location>
        <begin position="611"/>
        <end position="615"/>
    </location>
</feature>
<feature type="helix" evidence="9">
    <location>
        <begin position="616"/>
        <end position="623"/>
    </location>
</feature>
<reference key="1">
    <citation type="journal article" date="1996" name="Microbiology">
        <title>Bacillus subtilis mutS mutL operon: identification, nucleotide sequence and mutagenesis.</title>
        <authorList>
            <person name="Ginetti F."/>
            <person name="Perego M."/>
            <person name="Albertini A.M."/>
            <person name="Galizzi A."/>
        </authorList>
    </citation>
    <scope>NUCLEOTIDE SEQUENCE [GENOMIC DNA]</scope>
    <scope>INDUCTION</scope>
    <scope>DISRUPTION PHENOTYPE</scope>
    <source>
        <strain>168</strain>
    </source>
</reference>
<reference key="2">
    <citation type="journal article" date="1997" name="Nature">
        <title>The complete genome sequence of the Gram-positive bacterium Bacillus subtilis.</title>
        <authorList>
            <person name="Kunst F."/>
            <person name="Ogasawara N."/>
            <person name="Moszer I."/>
            <person name="Albertini A.M."/>
            <person name="Alloni G."/>
            <person name="Azevedo V."/>
            <person name="Bertero M.G."/>
            <person name="Bessieres P."/>
            <person name="Bolotin A."/>
            <person name="Borchert S."/>
            <person name="Borriss R."/>
            <person name="Boursier L."/>
            <person name="Brans A."/>
            <person name="Braun M."/>
            <person name="Brignell S.C."/>
            <person name="Bron S."/>
            <person name="Brouillet S."/>
            <person name="Bruschi C.V."/>
            <person name="Caldwell B."/>
            <person name="Capuano V."/>
            <person name="Carter N.M."/>
            <person name="Choi S.-K."/>
            <person name="Codani J.-J."/>
            <person name="Connerton I.F."/>
            <person name="Cummings N.J."/>
            <person name="Daniel R.A."/>
            <person name="Denizot F."/>
            <person name="Devine K.M."/>
            <person name="Duesterhoeft A."/>
            <person name="Ehrlich S.D."/>
            <person name="Emmerson P.T."/>
            <person name="Entian K.-D."/>
            <person name="Errington J."/>
            <person name="Fabret C."/>
            <person name="Ferrari E."/>
            <person name="Foulger D."/>
            <person name="Fritz C."/>
            <person name="Fujita M."/>
            <person name="Fujita Y."/>
            <person name="Fuma S."/>
            <person name="Galizzi A."/>
            <person name="Galleron N."/>
            <person name="Ghim S.-Y."/>
            <person name="Glaser P."/>
            <person name="Goffeau A."/>
            <person name="Golightly E.J."/>
            <person name="Grandi G."/>
            <person name="Guiseppi G."/>
            <person name="Guy B.J."/>
            <person name="Haga K."/>
            <person name="Haiech J."/>
            <person name="Harwood C.R."/>
            <person name="Henaut A."/>
            <person name="Hilbert H."/>
            <person name="Holsappel S."/>
            <person name="Hosono S."/>
            <person name="Hullo M.-F."/>
            <person name="Itaya M."/>
            <person name="Jones L.-M."/>
            <person name="Joris B."/>
            <person name="Karamata D."/>
            <person name="Kasahara Y."/>
            <person name="Klaerr-Blanchard M."/>
            <person name="Klein C."/>
            <person name="Kobayashi Y."/>
            <person name="Koetter P."/>
            <person name="Koningstein G."/>
            <person name="Krogh S."/>
            <person name="Kumano M."/>
            <person name="Kurita K."/>
            <person name="Lapidus A."/>
            <person name="Lardinois S."/>
            <person name="Lauber J."/>
            <person name="Lazarevic V."/>
            <person name="Lee S.-M."/>
            <person name="Levine A."/>
            <person name="Liu H."/>
            <person name="Masuda S."/>
            <person name="Mauel C."/>
            <person name="Medigue C."/>
            <person name="Medina N."/>
            <person name="Mellado R.P."/>
            <person name="Mizuno M."/>
            <person name="Moestl D."/>
            <person name="Nakai S."/>
            <person name="Noback M."/>
            <person name="Noone D."/>
            <person name="O'Reilly M."/>
            <person name="Ogawa K."/>
            <person name="Ogiwara A."/>
            <person name="Oudega B."/>
            <person name="Park S.-H."/>
            <person name="Parro V."/>
            <person name="Pohl T.M."/>
            <person name="Portetelle D."/>
            <person name="Porwollik S."/>
            <person name="Prescott A.M."/>
            <person name="Presecan E."/>
            <person name="Pujic P."/>
            <person name="Purnelle B."/>
            <person name="Rapoport G."/>
            <person name="Rey M."/>
            <person name="Reynolds S."/>
            <person name="Rieger M."/>
            <person name="Rivolta C."/>
            <person name="Rocha E."/>
            <person name="Roche B."/>
            <person name="Rose M."/>
            <person name="Sadaie Y."/>
            <person name="Sato T."/>
            <person name="Scanlan E."/>
            <person name="Schleich S."/>
            <person name="Schroeter R."/>
            <person name="Scoffone F."/>
            <person name="Sekiguchi J."/>
            <person name="Sekowska A."/>
            <person name="Seror S.J."/>
            <person name="Serror P."/>
            <person name="Shin B.-S."/>
            <person name="Soldo B."/>
            <person name="Sorokin A."/>
            <person name="Tacconi E."/>
            <person name="Takagi T."/>
            <person name="Takahashi H."/>
            <person name="Takemaru K."/>
            <person name="Takeuchi M."/>
            <person name="Tamakoshi A."/>
            <person name="Tanaka T."/>
            <person name="Terpstra P."/>
            <person name="Tognoni A."/>
            <person name="Tosato V."/>
            <person name="Uchiyama S."/>
            <person name="Vandenbol M."/>
            <person name="Vannier F."/>
            <person name="Vassarotti A."/>
            <person name="Viari A."/>
            <person name="Wambutt R."/>
            <person name="Wedler E."/>
            <person name="Wedler H."/>
            <person name="Weitzenegger T."/>
            <person name="Winters P."/>
            <person name="Wipat A."/>
            <person name="Yamamoto H."/>
            <person name="Yamane K."/>
            <person name="Yasumoto K."/>
            <person name="Yata K."/>
            <person name="Yoshida K."/>
            <person name="Yoshikawa H.-F."/>
            <person name="Zumstein E."/>
            <person name="Yoshikawa H."/>
            <person name="Danchin A."/>
        </authorList>
    </citation>
    <scope>NUCLEOTIDE SEQUENCE [LARGE SCALE GENOMIC DNA]</scope>
    <source>
        <strain>168</strain>
    </source>
</reference>
<reference key="3">
    <citation type="journal article" date="2000" name="J. Gen. Appl. Microbiol.">
        <title>Genetic analysis of Bacillus subtilis mutator genes.</title>
        <authorList>
            <person name="Sasaki M."/>
            <person name="Yonemura Y."/>
            <person name="Kurusu Y."/>
        </authorList>
    </citation>
    <scope>DISRUPTION PHENOTYPE</scope>
    <source>
        <strain>168</strain>
    </source>
</reference>
<reference key="4">
    <citation type="journal article" date="2009" name="J. Bacteriol.">
        <title>Defects in the error prevention oxidized guanine system potentiate stationary-phase mutagenesis in Bacillus subtilis.</title>
        <authorList>
            <person name="Vidales L.E."/>
            <person name="Cardenas L.C."/>
            <person name="Robleto E."/>
            <person name="Yasbin R.E."/>
            <person name="Pedraza-Reyes M."/>
        </authorList>
    </citation>
    <scope>POSSIBLE ROLE IN STATIONARY-PHASE-INDUCED MUTAGENESIS REPAIR</scope>
    <source>
        <strain>168 / YB955</strain>
    </source>
</reference>
<comment type="function">
    <text evidence="1">This protein is involved in the repair of mismatches in DNA. It is required for dam-dependent methyl-directed DNA mismatch repair. May act as a 'molecular matchmaker', a protein that promotes the formation of a stable complex between two or more DNA-binding proteins in an ATP-dependent manner without itself being part of a final effector complex (By similarity). Overexpression of mutSL partially suppresses the high spontaneous mutation frequency of a ytkD/mutM/mutY triple disruption which lacks the system required to prevent damage by oxidized guanine (8-oxo-dGTP). This suggests that MutSL also functions to repair mismatches due to oxidative stress in both growing and stationary phase cells.</text>
</comment>
<comment type="induction">
    <text evidence="4 7">Constitutively transcribed during vegetative growth, with a slight increase during stationary phase (PubMed:8760914). Probably part of the mutS-mutL operon (Probable) (PubMed:8760914).</text>
</comment>
<comment type="disruption phenotype">
    <text evidence="3 4">Double mutS-mutL deletion strain have 40-60 times greater spontaneous mutation rate (PubMed:8760914). Cells lacking this gene have an 80-fold increased spontaneous mutation frequency (PubMed:12483591). A double mutS/mutL and a triple mutS/mutL/nth disruption have a 200 to 280-fold increased spontaneous mutation frequency (PubMed:12483591).</text>
</comment>
<comment type="similarity">
    <text evidence="6">Belongs to the DNA mismatch repair MutL/HexB family.</text>
</comment>
<gene>
    <name evidence="5" type="primary">mutL</name>
    <name type="ordered locus">BSU17050</name>
</gene>
<accession>P49850</accession>
<sequence>MAKVIQLSDELSNKIAAGEVVERPASVVKELVENAIDADSTVIEIDIEEAGLASIRVLDNGEGMENEDCKRAFRRHATSKIKDENDLFRVRTLGFRGEALPSIASVSHLEITTSTGEGAGTKLVLQGGNIISESRSSSRKGTEIVVSNLFFNTPARLKYMKTVHTELGNITDVVNRIALAHPEVSIRLRHHGKNLLQTNGNGDVRHVLAAIYGTAVAKKMLPLHVSSLDFEVKGYIALPEITRASRNYMSSVVNGRYIKNFPLVKAVHEGYHTLLPIGRHPITFIEITMDPILVDVNVHPSKLEVRLSKETELHDLIRDGIKDVFKQQQLIPSAQVPKKSAPAIKNEQQFITFDEKPPEKKVPEKSTAPSYSPMKLSSVVKEPVDAEEKLPPLQFDAPPIVDQEQTLEVSDVSAEQPETFEQECHEEQPQPASDRVPIMYPIGQMHGTYILAQNENGLYIIDQHAAQERIKYEYFREKVGEVEPEVQEMIVPLTFHYSTNEALIIEQHKQELESVGVFLESFGSNSYIVRCHPAWFPKGEEAELIEEIIQQVLDSKNIDIKKLREEAAIMMSCKGSIKANRHLRNDEIKALLDDLRSTSDPFTCPHGRPIIIHHSTYEMEKMFKRVM</sequence>
<protein>
    <recommendedName>
        <fullName>DNA mismatch repair protein MutL</fullName>
    </recommendedName>
</protein>